<evidence type="ECO:0000250" key="1"/>
<evidence type="ECO:0000250" key="2">
    <source>
        <dbReference type="UniProtKB" id="O00264"/>
    </source>
</evidence>
<evidence type="ECO:0000250" key="3">
    <source>
        <dbReference type="UniProtKB" id="O55022"/>
    </source>
</evidence>
<evidence type="ECO:0000255" key="4"/>
<evidence type="ECO:0000256" key="5">
    <source>
        <dbReference type="SAM" id="MobiDB-lite"/>
    </source>
</evidence>
<evidence type="ECO:0000269" key="6">
    <source>
    </source>
</evidence>
<evidence type="ECO:0000305" key="7"/>
<feature type="initiator methionine" description="Removed" evidence="6">
    <location>
        <position position="1"/>
    </location>
</feature>
<feature type="chain" id="PRO_0000121741" description="Membrane-associated progesterone receptor component 1">
    <location>
        <begin position="2"/>
        <end position="194"/>
    </location>
</feature>
<feature type="topological domain" description="Lumenal" evidence="4">
    <location>
        <begin position="2"/>
        <end position="24"/>
    </location>
</feature>
<feature type="transmembrane region" description="Helical" evidence="4">
    <location>
        <begin position="25"/>
        <end position="43"/>
    </location>
</feature>
<feature type="topological domain" description="Cytoplasmic" evidence="4">
    <location>
        <begin position="44"/>
        <end position="194"/>
    </location>
</feature>
<feature type="domain" description="Cytochrome b5 heme-binding">
    <location>
        <begin position="71"/>
        <end position="170"/>
    </location>
</feature>
<feature type="region of interest" description="Disordered" evidence="5">
    <location>
        <begin position="50"/>
        <end position="70"/>
    </location>
</feature>
<feature type="region of interest" description="Disordered" evidence="5">
    <location>
        <begin position="172"/>
        <end position="194"/>
    </location>
</feature>
<feature type="binding site" description="axial binding residue" evidence="2">
    <location>
        <position position="112"/>
    </location>
    <ligand>
        <name>heme</name>
        <dbReference type="ChEBI" id="CHEBI:30413"/>
    </ligand>
    <ligandPart>
        <name>Fe</name>
        <dbReference type="ChEBI" id="CHEBI:18248"/>
    </ligandPart>
</feature>
<feature type="modified residue" description="Phosphoserine" evidence="2">
    <location>
        <position position="54"/>
    </location>
</feature>
<feature type="modified residue" description="Phosphoserine" evidence="2">
    <location>
        <position position="56"/>
    </location>
</feature>
<feature type="modified residue" description="Phosphothreonine" evidence="2">
    <location>
        <position position="73"/>
    </location>
</feature>
<feature type="modified residue" description="Phosphoserine" evidence="2">
    <location>
        <position position="180"/>
    </location>
</feature>
<name>PGRC1_PIG</name>
<gene>
    <name type="primary">PGRMC1</name>
    <name type="synonym">PGRMC</name>
</gene>
<proteinExistence type="evidence at protein level"/>
<keyword id="KW-0903">Direct protein sequencing</keyword>
<keyword id="KW-0256">Endoplasmic reticulum</keyword>
<keyword id="KW-0408">Iron</keyword>
<keyword id="KW-0446">Lipid-binding</keyword>
<keyword id="KW-0472">Membrane</keyword>
<keyword id="KW-0479">Metal-binding</keyword>
<keyword id="KW-0492">Microsome</keyword>
<keyword id="KW-0496">Mitochondrion</keyword>
<keyword id="KW-1000">Mitochondrion outer membrane</keyword>
<keyword id="KW-0597">Phosphoprotein</keyword>
<keyword id="KW-0675">Receptor</keyword>
<keyword id="KW-1185">Reference proteome</keyword>
<keyword id="KW-0964">Secreted</keyword>
<keyword id="KW-0754">Steroid-binding</keyword>
<keyword id="KW-0812">Transmembrane</keyword>
<keyword id="KW-1133">Transmembrane helix</keyword>
<sequence length="194" mass="21609">MAAEDVAATGADPSELEGGGLLHEIFTSPLNLLLLGLCIFLLYKIVRGDQPAASDSDDDEPPPLPRLKRRDFTPAELRRFDGVQDPRILMAINGKVFDVTKGRKFYGPEGPYGVFAGRDASRGLATFCLDKEALKDEYDDLSDLTPAQQETLNDWDSQFTFKYHHVGKLLKEGEEPTVYSDEEEPKDESARKND</sequence>
<accession>Q95250</accession>
<organism>
    <name type="scientific">Sus scrofa</name>
    <name type="common">Pig</name>
    <dbReference type="NCBI Taxonomy" id="9823"/>
    <lineage>
        <taxon>Eukaryota</taxon>
        <taxon>Metazoa</taxon>
        <taxon>Chordata</taxon>
        <taxon>Craniata</taxon>
        <taxon>Vertebrata</taxon>
        <taxon>Euteleostomi</taxon>
        <taxon>Mammalia</taxon>
        <taxon>Eutheria</taxon>
        <taxon>Laurasiatheria</taxon>
        <taxon>Artiodactyla</taxon>
        <taxon>Suina</taxon>
        <taxon>Suidae</taxon>
        <taxon>Sus</taxon>
    </lineage>
</organism>
<reference key="1">
    <citation type="journal article" date="1996" name="Biochem. Biophys. Res. Commun.">
        <title>Full-length cDNA sequence of a progesterone membrane-binding protein from porcine vascular smooth muscle cells.</title>
        <authorList>
            <person name="Falkenstein E."/>
            <person name="Meyer C."/>
            <person name="Eisen C."/>
            <person name="Scriba P.C."/>
            <person name="Wehling M."/>
        </authorList>
    </citation>
    <scope>NUCLEOTIDE SEQUENCE [MRNA]</scope>
    <source>
        <tissue>Vascular smooth muscle</tissue>
    </source>
</reference>
<reference key="2">
    <citation type="journal article" date="1996" name="Eur. J. Biochem.">
        <title>Purification and partial sequencing of high-affinity progesterone-binding site(s) from porcine liver membranes.</title>
        <authorList>
            <person name="Meyer C."/>
            <person name="Schmid R."/>
            <person name="Scriba P.C."/>
            <person name="Wehling M."/>
        </authorList>
    </citation>
    <scope>PROTEIN SEQUENCE OF 2-21</scope>
    <scope>CHARACTERIZATION</scope>
    <scope>SUBCELLULAR LOCATION</scope>
    <source>
        <tissue>Liver</tissue>
    </source>
</reference>
<protein>
    <recommendedName>
        <fullName>Membrane-associated progesterone receptor component 1</fullName>
        <shortName evidence="2">mPR</shortName>
    </recommendedName>
</protein>
<dbReference type="EMBL" id="X99714">
    <property type="protein sequence ID" value="CAA68050.1"/>
    <property type="molecule type" value="mRNA"/>
</dbReference>
<dbReference type="PIR" id="JC5260">
    <property type="entry name" value="JC5260"/>
</dbReference>
<dbReference type="RefSeq" id="NP_999076.1">
    <property type="nucleotide sequence ID" value="NM_213911.1"/>
</dbReference>
<dbReference type="SMR" id="Q95250"/>
<dbReference type="FunCoup" id="Q95250">
    <property type="interactions" value="1340"/>
</dbReference>
<dbReference type="STRING" id="9823.ENSSSCP00000029059"/>
<dbReference type="GlyGen" id="Q95250">
    <property type="glycosylation" value="1 site, 1 O-linked glycan (1 site)"/>
</dbReference>
<dbReference type="iPTMnet" id="Q95250"/>
<dbReference type="PaxDb" id="9823-ENSSSCP00000013423"/>
<dbReference type="PeptideAtlas" id="Q95250"/>
<dbReference type="Ensembl" id="ENSSSCT00000035161.3">
    <property type="protein sequence ID" value="ENSSSCP00000029059.2"/>
    <property type="gene ID" value="ENSSSCG00000012625.6"/>
</dbReference>
<dbReference type="Ensembl" id="ENSSSCT00015012355.1">
    <property type="protein sequence ID" value="ENSSSCP00015004831.1"/>
    <property type="gene ID" value="ENSSSCG00015009336.1"/>
</dbReference>
<dbReference type="Ensembl" id="ENSSSCT00025096587.1">
    <property type="protein sequence ID" value="ENSSSCP00025042403.1"/>
    <property type="gene ID" value="ENSSSCG00025070346.1"/>
</dbReference>
<dbReference type="Ensembl" id="ENSSSCT00030047828.1">
    <property type="protein sequence ID" value="ENSSSCP00030021548.1"/>
    <property type="gene ID" value="ENSSSCG00030034525.1"/>
</dbReference>
<dbReference type="Ensembl" id="ENSSSCT00035101064.1">
    <property type="protein sequence ID" value="ENSSSCP00035042984.1"/>
    <property type="gene ID" value="ENSSSCG00035074446.1"/>
</dbReference>
<dbReference type="Ensembl" id="ENSSSCT00040046175.1">
    <property type="protein sequence ID" value="ENSSSCP00040019365.1"/>
    <property type="gene ID" value="ENSSSCG00040034317.1"/>
</dbReference>
<dbReference type="Ensembl" id="ENSSSCT00045059480.1">
    <property type="protein sequence ID" value="ENSSSCP00045041702.1"/>
    <property type="gene ID" value="ENSSSCG00045034716.1"/>
</dbReference>
<dbReference type="Ensembl" id="ENSSSCT00050101110.1">
    <property type="protein sequence ID" value="ENSSSCP00050043942.1"/>
    <property type="gene ID" value="ENSSSCG00050073899.1"/>
</dbReference>
<dbReference type="Ensembl" id="ENSSSCT00055053272.1">
    <property type="protein sequence ID" value="ENSSSCP00055042506.1"/>
    <property type="gene ID" value="ENSSSCG00055026958.1"/>
</dbReference>
<dbReference type="Ensembl" id="ENSSSCT00060055303.1">
    <property type="protein sequence ID" value="ENSSSCP00060023627.1"/>
    <property type="gene ID" value="ENSSSCG00060040801.1"/>
</dbReference>
<dbReference type="Ensembl" id="ENSSSCT00065046988.1">
    <property type="protein sequence ID" value="ENSSSCP00065020212.1"/>
    <property type="gene ID" value="ENSSSCG00065034517.1"/>
</dbReference>
<dbReference type="Ensembl" id="ENSSSCT00070016400.1">
    <property type="protein sequence ID" value="ENSSSCP00070013576.1"/>
    <property type="gene ID" value="ENSSSCG00070008491.1"/>
</dbReference>
<dbReference type="Ensembl" id="ENSSSCT00085046575">
    <property type="protein sequence ID" value="ENSSSCP00085032466"/>
    <property type="gene ID" value="ENSSSCG00085024292"/>
</dbReference>
<dbReference type="Ensembl" id="ENSSSCT00105061011">
    <property type="protein sequence ID" value="ENSSSCP00105043306"/>
    <property type="gene ID" value="ENSSSCG00105032041"/>
</dbReference>
<dbReference type="Ensembl" id="ENSSSCT00110020422">
    <property type="protein sequence ID" value="ENSSSCP00110013750"/>
    <property type="gene ID" value="ENSSSCG00110010669"/>
</dbReference>
<dbReference type="Ensembl" id="ENSSSCT00115002539">
    <property type="protein sequence ID" value="ENSSSCP00115002362"/>
    <property type="gene ID" value="ENSSSCG00115001506"/>
</dbReference>
<dbReference type="Ensembl" id="ENSSSCT00130012898">
    <property type="protein sequence ID" value="ENSSSCP00130008549"/>
    <property type="gene ID" value="ENSSSCG00130007087"/>
</dbReference>
<dbReference type="GeneID" id="396946"/>
<dbReference type="KEGG" id="ssc:396946"/>
<dbReference type="CTD" id="10857"/>
<dbReference type="VGNC" id="VGNC:91363">
    <property type="gene designation" value="PGRMC1"/>
</dbReference>
<dbReference type="eggNOG" id="KOG1110">
    <property type="taxonomic scope" value="Eukaryota"/>
</dbReference>
<dbReference type="GeneTree" id="ENSGT00940000160619"/>
<dbReference type="HOGENOM" id="CLU_042860_1_0_1"/>
<dbReference type="InParanoid" id="Q95250"/>
<dbReference type="OMA" id="ANEWETQ"/>
<dbReference type="OrthoDB" id="547796at2759"/>
<dbReference type="TreeFam" id="TF314562"/>
<dbReference type="Reactome" id="R-SSC-6798695">
    <property type="pathway name" value="Neutrophil degranulation"/>
</dbReference>
<dbReference type="Proteomes" id="UP000008227">
    <property type="component" value="Chromosome X"/>
</dbReference>
<dbReference type="Proteomes" id="UP000314985">
    <property type="component" value="Unassembled WGS sequence"/>
</dbReference>
<dbReference type="Proteomes" id="UP000694570">
    <property type="component" value="Unplaced"/>
</dbReference>
<dbReference type="Proteomes" id="UP000694571">
    <property type="component" value="Unplaced"/>
</dbReference>
<dbReference type="Proteomes" id="UP000694720">
    <property type="component" value="Unplaced"/>
</dbReference>
<dbReference type="Proteomes" id="UP000694722">
    <property type="component" value="Unplaced"/>
</dbReference>
<dbReference type="Proteomes" id="UP000694723">
    <property type="component" value="Unplaced"/>
</dbReference>
<dbReference type="Proteomes" id="UP000694724">
    <property type="component" value="Unplaced"/>
</dbReference>
<dbReference type="Proteomes" id="UP000694725">
    <property type="component" value="Unplaced"/>
</dbReference>
<dbReference type="Proteomes" id="UP000694726">
    <property type="component" value="Unplaced"/>
</dbReference>
<dbReference type="Proteomes" id="UP000694727">
    <property type="component" value="Unplaced"/>
</dbReference>
<dbReference type="Proteomes" id="UP000694728">
    <property type="component" value="Unplaced"/>
</dbReference>
<dbReference type="Bgee" id="ENSSSCG00000012625">
    <property type="expression patterns" value="Expressed in adult mammalian kidney and 43 other cell types or tissues"/>
</dbReference>
<dbReference type="ExpressionAtlas" id="Q95250">
    <property type="expression patterns" value="baseline and differential"/>
</dbReference>
<dbReference type="GO" id="GO:0012505">
    <property type="term" value="C:endomembrane system"/>
    <property type="evidence" value="ECO:0000318"/>
    <property type="project" value="GO_Central"/>
</dbReference>
<dbReference type="GO" id="GO:0005783">
    <property type="term" value="C:endoplasmic reticulum"/>
    <property type="evidence" value="ECO:0000318"/>
    <property type="project" value="GO_Central"/>
</dbReference>
<dbReference type="GO" id="GO:0005576">
    <property type="term" value="C:extracellular region"/>
    <property type="evidence" value="ECO:0007669"/>
    <property type="project" value="UniProtKB-SubCell"/>
</dbReference>
<dbReference type="GO" id="GO:0016020">
    <property type="term" value="C:membrane"/>
    <property type="evidence" value="ECO:0000318"/>
    <property type="project" value="GO_Central"/>
</dbReference>
<dbReference type="GO" id="GO:0005741">
    <property type="term" value="C:mitochondrial outer membrane"/>
    <property type="evidence" value="ECO:0000250"/>
    <property type="project" value="UniProtKB"/>
</dbReference>
<dbReference type="GO" id="GO:0030868">
    <property type="term" value="C:smooth endoplasmic reticulum membrane"/>
    <property type="evidence" value="ECO:0007669"/>
    <property type="project" value="UniProtKB-SubCell"/>
</dbReference>
<dbReference type="GO" id="GO:0020037">
    <property type="term" value="F:heme binding"/>
    <property type="evidence" value="ECO:0000250"/>
    <property type="project" value="UniProtKB"/>
</dbReference>
<dbReference type="GO" id="GO:0046872">
    <property type="term" value="F:metal ion binding"/>
    <property type="evidence" value="ECO:0007669"/>
    <property type="project" value="UniProtKB-KW"/>
</dbReference>
<dbReference type="GO" id="GO:0042803">
    <property type="term" value="F:protein homodimerization activity"/>
    <property type="evidence" value="ECO:0000250"/>
    <property type="project" value="UniProtKB"/>
</dbReference>
<dbReference type="GO" id="GO:0005496">
    <property type="term" value="F:steroid binding"/>
    <property type="evidence" value="ECO:0007669"/>
    <property type="project" value="UniProtKB-KW"/>
</dbReference>
<dbReference type="GO" id="GO:0006783">
    <property type="term" value="P:heme biosynthetic process"/>
    <property type="evidence" value="ECO:0000250"/>
    <property type="project" value="UniProtKB"/>
</dbReference>
<dbReference type="GO" id="GO:0140077">
    <property type="term" value="P:positive regulation of lipoprotein transport"/>
    <property type="evidence" value="ECO:0000250"/>
    <property type="project" value="UniProtKB"/>
</dbReference>
<dbReference type="GO" id="GO:1903078">
    <property type="term" value="P:positive regulation of protein localization to plasma membrane"/>
    <property type="evidence" value="ECO:0007669"/>
    <property type="project" value="Ensembl"/>
</dbReference>
<dbReference type="FunFam" id="3.10.120.10:FF:000003">
    <property type="entry name" value="membrane-associated progesterone receptor component 1"/>
    <property type="match status" value="1"/>
</dbReference>
<dbReference type="Gene3D" id="3.10.120.10">
    <property type="entry name" value="Cytochrome b5-like heme/steroid binding domain"/>
    <property type="match status" value="1"/>
</dbReference>
<dbReference type="InterPro" id="IPR001199">
    <property type="entry name" value="Cyt_B5-like_heme/steroid-bd"/>
</dbReference>
<dbReference type="InterPro" id="IPR036400">
    <property type="entry name" value="Cyt_B5-like_heme/steroid_sf"/>
</dbReference>
<dbReference type="InterPro" id="IPR050577">
    <property type="entry name" value="MAPR/NEUFC/NENF-like"/>
</dbReference>
<dbReference type="PANTHER" id="PTHR10281:SF23">
    <property type="entry name" value="MEMBRANE-ASSOCIATED PROGESTERONE RECEPTOR COMPONENT 1"/>
    <property type="match status" value="1"/>
</dbReference>
<dbReference type="PANTHER" id="PTHR10281">
    <property type="entry name" value="MEMBRANE-ASSOCIATED PROGESTERONE RECEPTOR COMPONENT-RELATED"/>
    <property type="match status" value="1"/>
</dbReference>
<dbReference type="Pfam" id="PF00173">
    <property type="entry name" value="Cyt-b5"/>
    <property type="match status" value="1"/>
</dbReference>
<dbReference type="SMART" id="SM01117">
    <property type="entry name" value="Cyt-b5"/>
    <property type="match status" value="1"/>
</dbReference>
<dbReference type="SUPFAM" id="SSF55856">
    <property type="entry name" value="Cytochrome b5-like heme/steroid binding domain"/>
    <property type="match status" value="1"/>
</dbReference>
<comment type="function">
    <text evidence="2 3">Component of a progesterone-binding protein complex. Binds progesterone (By similarity). Has many reported cellular functions (heme homeostasis, interaction with CYPs). Required for the maintenance of uterine histoarchitecture and normal female reproductive lifespan (By similarity). Intracellular heme chaperone. Regulates heme synthesis via interactions with FECH and acts as a heme donor for at least some hemoproteins (By similarity). Forms a ternary complex with TMEM97 receptor and low density lipid receptor/LDLR, which increases LDLR-mediated LDL lipoprotein internalization (By similarity).</text>
</comment>
<comment type="subunit">
    <text evidence="2">Homodimer. Forms stable homodimer through hydrophobic heme-heme stacking interactions. Interacts with FECH; the interaction results in decreased FECH activity. Interacts with EGFR, CYP1A1 and CYP3A4; the interactions require PGRMC1 homodimerization. Interacts with TMEM97 and LDLR; the interaction increases LDL internalization.</text>
</comment>
<comment type="subcellular location">
    <subcellularLocation>
        <location evidence="6">Microsome membrane</location>
        <topology evidence="4">Single-pass membrane protein</topology>
    </subcellularLocation>
    <subcellularLocation>
        <location evidence="2">Smooth endoplasmic reticulum membrane</location>
        <topology evidence="4">Single-pass membrane protein</topology>
    </subcellularLocation>
    <subcellularLocation>
        <location evidence="3">Mitochondrion outer membrane</location>
        <topology evidence="2">Single-pass membrane protein</topology>
        <orientation evidence="3">Extracellular side</orientation>
    </subcellularLocation>
    <subcellularLocation>
        <location evidence="2">Secreted</location>
    </subcellularLocation>
</comment>
<comment type="domain">
    <text evidence="1">The cytochrome b5 heme-binding domain lacks the conserved iron-binding His residues at positions 106 and 130.</text>
</comment>
<comment type="miscellaneous">
    <text evidence="2">Non-classical progesterone receptors involved in extranuclear signaling are classified in 2 groups: the class II progestin and adipoQ receptor (PAQR) family (also called mPRs) (PAQR5, PAQR6, PAQR7, PAQR8 and PAQR9) and the b5-like heme/steroid-binding protein family (also called MAPRs) (PGRMC1, PGRMC2, NENF and CYB5D2).</text>
</comment>
<comment type="similarity">
    <text evidence="7">Belongs to the cytochrome b5 family. MAPR subfamily.</text>
</comment>